<dbReference type="EMBL" id="AF403031">
    <property type="protein sequence ID" value="AAL57350.1"/>
    <property type="status" value="ALT_FRAME"/>
    <property type="molecule type" value="mRNA"/>
</dbReference>
<dbReference type="EMBL" id="AK023196">
    <property type="protein sequence ID" value="BAB14456.1"/>
    <property type="molecule type" value="mRNA"/>
</dbReference>
<dbReference type="EMBL" id="AK292071">
    <property type="protein sequence ID" value="BAF84760.1"/>
    <property type="molecule type" value="mRNA"/>
</dbReference>
<dbReference type="EMBL" id="CR457302">
    <property type="protein sequence ID" value="CAG33583.1"/>
    <property type="molecule type" value="mRNA"/>
</dbReference>
<dbReference type="EMBL" id="AL365356">
    <property type="status" value="NOT_ANNOTATED_CDS"/>
    <property type="molecule type" value="Genomic_DNA"/>
</dbReference>
<dbReference type="EMBL" id="CH471072">
    <property type="protein sequence ID" value="EAW86435.1"/>
    <property type="molecule type" value="Genomic_DNA"/>
</dbReference>
<dbReference type="EMBL" id="CH471072">
    <property type="protein sequence ID" value="EAW86436.1"/>
    <property type="molecule type" value="Genomic_DNA"/>
</dbReference>
<dbReference type="EMBL" id="BC012056">
    <property type="protein sequence ID" value="AAH12056.1"/>
    <property type="molecule type" value="mRNA"/>
</dbReference>
<dbReference type="CCDS" id="CCDS7070.1">
    <molecule id="Q8WXK3-1"/>
</dbReference>
<dbReference type="RefSeq" id="NP_078977.2">
    <molecule id="Q8WXK3-1"/>
    <property type="nucleotide sequence ID" value="NM_024701.3"/>
</dbReference>
<dbReference type="SMR" id="Q8WXK3"/>
<dbReference type="BioGRID" id="122865">
    <property type="interactions" value="35"/>
</dbReference>
<dbReference type="FunCoup" id="Q8WXK3">
    <property type="interactions" value="568"/>
</dbReference>
<dbReference type="IntAct" id="Q8WXK3">
    <property type="interactions" value="35"/>
</dbReference>
<dbReference type="MINT" id="Q8WXK3"/>
<dbReference type="STRING" id="9606.ENSP00000350331"/>
<dbReference type="iPTMnet" id="Q8WXK3"/>
<dbReference type="PhosphoSitePlus" id="Q8WXK3"/>
<dbReference type="BioMuta" id="ASB13"/>
<dbReference type="DMDM" id="20531995"/>
<dbReference type="jPOST" id="Q8WXK3"/>
<dbReference type="MassIVE" id="Q8WXK3"/>
<dbReference type="PaxDb" id="9606-ENSP00000350331"/>
<dbReference type="PeptideAtlas" id="Q8WXK3"/>
<dbReference type="ProteomicsDB" id="75073">
    <molecule id="Q8WXK3-1"/>
</dbReference>
<dbReference type="ProteomicsDB" id="75074">
    <molecule id="Q8WXK3-2"/>
</dbReference>
<dbReference type="Pumba" id="Q8WXK3"/>
<dbReference type="Antibodypedia" id="24111">
    <property type="antibodies" value="140 antibodies from 19 providers"/>
</dbReference>
<dbReference type="DNASU" id="79754"/>
<dbReference type="Ensembl" id="ENST00000357700.11">
    <molecule id="Q8WXK3-1"/>
    <property type="protein sequence ID" value="ENSP00000350331.6"/>
    <property type="gene ID" value="ENSG00000196372.13"/>
</dbReference>
<dbReference type="Ensembl" id="ENST00000459912.5">
    <molecule id="Q8WXK3-2"/>
    <property type="protein sequence ID" value="ENSP00000433358.1"/>
    <property type="gene ID" value="ENSG00000196372.13"/>
</dbReference>
<dbReference type="GeneID" id="79754"/>
<dbReference type="KEGG" id="hsa:79754"/>
<dbReference type="MANE-Select" id="ENST00000357700.11">
    <property type="protein sequence ID" value="ENSP00000350331.6"/>
    <property type="RefSeq nucleotide sequence ID" value="NM_024701.4"/>
    <property type="RefSeq protein sequence ID" value="NP_078977.2"/>
</dbReference>
<dbReference type="UCSC" id="uc001iig.3">
    <molecule id="Q8WXK3-1"/>
    <property type="organism name" value="human"/>
</dbReference>
<dbReference type="AGR" id="HGNC:19765"/>
<dbReference type="CTD" id="79754"/>
<dbReference type="DisGeNET" id="79754"/>
<dbReference type="GeneCards" id="ASB13"/>
<dbReference type="HGNC" id="HGNC:19765">
    <property type="gene designation" value="ASB13"/>
</dbReference>
<dbReference type="HPA" id="ENSG00000196372">
    <property type="expression patterns" value="Low tissue specificity"/>
</dbReference>
<dbReference type="MalaCards" id="ASB13"/>
<dbReference type="MIM" id="615055">
    <property type="type" value="gene"/>
</dbReference>
<dbReference type="neXtProt" id="NX_Q8WXK3"/>
<dbReference type="OpenTargets" id="ENSG00000196372"/>
<dbReference type="PharmGKB" id="PA134992129"/>
<dbReference type="VEuPathDB" id="HostDB:ENSG00000196372"/>
<dbReference type="eggNOG" id="KOG0504">
    <property type="taxonomic scope" value="Eukaryota"/>
</dbReference>
<dbReference type="GeneTree" id="ENSGT00940000160326"/>
<dbReference type="HOGENOM" id="CLU_000134_4_2_1"/>
<dbReference type="InParanoid" id="Q8WXK3"/>
<dbReference type="OMA" id="AGFWVER"/>
<dbReference type="OrthoDB" id="10252328at2759"/>
<dbReference type="PAN-GO" id="Q8WXK3">
    <property type="GO annotations" value="0 GO annotations based on evolutionary models"/>
</dbReference>
<dbReference type="PhylomeDB" id="Q8WXK3"/>
<dbReference type="TreeFam" id="TF331945"/>
<dbReference type="PathwayCommons" id="Q8WXK3"/>
<dbReference type="Reactome" id="R-HSA-8951664">
    <property type="pathway name" value="Neddylation"/>
</dbReference>
<dbReference type="Reactome" id="R-HSA-983168">
    <property type="pathway name" value="Antigen processing: Ubiquitination &amp; Proteasome degradation"/>
</dbReference>
<dbReference type="SignaLink" id="Q8WXK3"/>
<dbReference type="UniPathway" id="UPA00143"/>
<dbReference type="BioGRID-ORCS" id="79754">
    <property type="hits" value="13 hits in 1192 CRISPR screens"/>
</dbReference>
<dbReference type="ChiTaRS" id="ASB13">
    <property type="organism name" value="human"/>
</dbReference>
<dbReference type="GeneWiki" id="ASB13"/>
<dbReference type="GenomeRNAi" id="79754"/>
<dbReference type="Pharos" id="Q8WXK3">
    <property type="development level" value="Tdark"/>
</dbReference>
<dbReference type="PRO" id="PR:Q8WXK3"/>
<dbReference type="Proteomes" id="UP000005640">
    <property type="component" value="Chromosome 10"/>
</dbReference>
<dbReference type="RNAct" id="Q8WXK3">
    <property type="molecule type" value="protein"/>
</dbReference>
<dbReference type="Bgee" id="ENSG00000196372">
    <property type="expression patterns" value="Expressed in pigmented layer of retina and 184 other cell types or tissues"/>
</dbReference>
<dbReference type="GO" id="GO:0005829">
    <property type="term" value="C:cytosol"/>
    <property type="evidence" value="ECO:0000304"/>
    <property type="project" value="Reactome"/>
</dbReference>
<dbReference type="GO" id="GO:0035556">
    <property type="term" value="P:intracellular signal transduction"/>
    <property type="evidence" value="ECO:0007669"/>
    <property type="project" value="InterPro"/>
</dbReference>
<dbReference type="GO" id="GO:0016567">
    <property type="term" value="P:protein ubiquitination"/>
    <property type="evidence" value="ECO:0007669"/>
    <property type="project" value="UniProtKB-UniPathway"/>
</dbReference>
<dbReference type="CDD" id="cd03729">
    <property type="entry name" value="SOCS_ASB13"/>
    <property type="match status" value="1"/>
</dbReference>
<dbReference type="FunFam" id="1.10.750.20:FF:000001">
    <property type="entry name" value="Ankyrin repeat and SOCS box containing 1"/>
    <property type="match status" value="1"/>
</dbReference>
<dbReference type="FunFam" id="1.25.40.20:FF:000016">
    <property type="entry name" value="Ankyrin repeat and SOCS box containing 5"/>
    <property type="match status" value="1"/>
</dbReference>
<dbReference type="Gene3D" id="1.25.40.20">
    <property type="entry name" value="Ankyrin repeat-containing domain"/>
    <property type="match status" value="1"/>
</dbReference>
<dbReference type="Gene3D" id="1.10.750.20">
    <property type="entry name" value="SOCS box"/>
    <property type="match status" value="1"/>
</dbReference>
<dbReference type="InterPro" id="IPR051573">
    <property type="entry name" value="Ankyrin-SOCS_box_domain"/>
</dbReference>
<dbReference type="InterPro" id="IPR002110">
    <property type="entry name" value="Ankyrin_rpt"/>
</dbReference>
<dbReference type="InterPro" id="IPR036770">
    <property type="entry name" value="Ankyrin_rpt-contain_sf"/>
</dbReference>
<dbReference type="InterPro" id="IPR037334">
    <property type="entry name" value="ASB13_SOCS"/>
</dbReference>
<dbReference type="InterPro" id="IPR001496">
    <property type="entry name" value="SOCS_box"/>
</dbReference>
<dbReference type="InterPro" id="IPR036036">
    <property type="entry name" value="SOCS_box-like_dom_sf"/>
</dbReference>
<dbReference type="PANTHER" id="PTHR24136:SF53">
    <property type="entry name" value="ANKYRIN REPEAT AND SOCS BOX CONTAINING 13"/>
    <property type="match status" value="1"/>
</dbReference>
<dbReference type="PANTHER" id="PTHR24136">
    <property type="entry name" value="SOWAH (DROSOPHILA) HOMOLOG"/>
    <property type="match status" value="1"/>
</dbReference>
<dbReference type="Pfam" id="PF00023">
    <property type="entry name" value="Ank"/>
    <property type="match status" value="1"/>
</dbReference>
<dbReference type="Pfam" id="PF12796">
    <property type="entry name" value="Ank_2"/>
    <property type="match status" value="2"/>
</dbReference>
<dbReference type="Pfam" id="PF07525">
    <property type="entry name" value="SOCS_box"/>
    <property type="match status" value="1"/>
</dbReference>
<dbReference type="PRINTS" id="PR01415">
    <property type="entry name" value="ANKYRIN"/>
</dbReference>
<dbReference type="SMART" id="SM00248">
    <property type="entry name" value="ANK"/>
    <property type="match status" value="6"/>
</dbReference>
<dbReference type="SMART" id="SM00969">
    <property type="entry name" value="SOCS_box"/>
    <property type="match status" value="1"/>
</dbReference>
<dbReference type="SUPFAM" id="SSF48403">
    <property type="entry name" value="Ankyrin repeat"/>
    <property type="match status" value="1"/>
</dbReference>
<dbReference type="SUPFAM" id="SSF158235">
    <property type="entry name" value="SOCS box-like"/>
    <property type="match status" value="1"/>
</dbReference>
<dbReference type="PROSITE" id="PS50297">
    <property type="entry name" value="ANK_REP_REGION"/>
    <property type="match status" value="1"/>
</dbReference>
<dbReference type="PROSITE" id="PS50088">
    <property type="entry name" value="ANK_REPEAT"/>
    <property type="match status" value="6"/>
</dbReference>
<dbReference type="PROSITE" id="PS50225">
    <property type="entry name" value="SOCS"/>
    <property type="match status" value="1"/>
</dbReference>
<evidence type="ECO:0000250" key="1"/>
<evidence type="ECO:0000255" key="2">
    <source>
        <dbReference type="PROSITE-ProRule" id="PRU00194"/>
    </source>
</evidence>
<evidence type="ECO:0000303" key="3">
    <source>
    </source>
</evidence>
<evidence type="ECO:0000305" key="4"/>
<comment type="function">
    <text evidence="1">May be a substrate-recognition component of a SCF-like ECS (Elongin-Cullin-SOCS-box protein) E3 ubiquitin-protein ligase complex which mediates the ubiquitination and subsequent proteasomal degradation of target proteins.</text>
</comment>
<comment type="pathway">
    <text>Protein modification; protein ubiquitination.</text>
</comment>
<comment type="interaction">
    <interactant intactId="EBI-707573">
        <id>Q8WXK3</id>
    </interactant>
    <interactant intactId="EBI-930964">
        <id>P54253</id>
        <label>ATXN1</label>
    </interactant>
    <organismsDiffer>false</organismsDiffer>
    <experiments>6</experiments>
</comment>
<comment type="interaction">
    <interactant intactId="EBI-707573">
        <id>Q8WXK3</id>
    </interactant>
    <interactant intactId="EBI-10976677">
        <id>G5E9A7</id>
        <label>DMWD</label>
    </interactant>
    <organismsDiffer>false</organismsDiffer>
    <experiments>3</experiments>
</comment>
<comment type="interaction">
    <interactant intactId="EBI-707573">
        <id>Q8WXK3</id>
    </interactant>
    <interactant intactId="EBI-745632">
        <id>Q9NWT6</id>
        <label>HIF1AN</label>
    </interactant>
    <organismsDiffer>false</organismsDiffer>
    <experiments>4</experiments>
</comment>
<comment type="interaction">
    <interactant intactId="EBI-707573">
        <id>Q8WXK3</id>
    </interactant>
    <interactant intactId="EBI-948266">
        <id>O14901</id>
        <label>KLF11</label>
    </interactant>
    <organismsDiffer>false</organismsDiffer>
    <experiments>3</experiments>
</comment>
<comment type="interaction">
    <interactant intactId="EBI-707573">
        <id>Q8WXK3</id>
    </interactant>
    <interactant intactId="EBI-707595">
        <id>P27448</id>
        <label>MARK3</label>
    </interactant>
    <organismsDiffer>false</organismsDiffer>
    <experiments>2</experiments>
</comment>
<comment type="interaction">
    <interactant intactId="EBI-707573">
        <id>Q8WXK3</id>
    </interactant>
    <interactant intactId="EBI-25929070">
        <id>Q9BZ23-2</id>
        <label>PANK2</label>
    </interactant>
    <organismsDiffer>false</organismsDiffer>
    <experiments>3</experiments>
</comment>
<comment type="interaction">
    <interactant intactId="EBI-707573">
        <id>Q8WXK3</id>
    </interactant>
    <interactant intactId="EBI-21251460">
        <id>O60260-5</id>
        <label>PRKN</label>
    </interactant>
    <organismsDiffer>false</organismsDiffer>
    <experiments>3</experiments>
</comment>
<comment type="interaction">
    <interactant intactId="EBI-707573">
        <id>Q8WXK3</id>
    </interactant>
    <interactant intactId="EBI-396669">
        <id>Q9Y3C5</id>
        <label>RNF11</label>
    </interactant>
    <organismsDiffer>false</organismsDiffer>
    <experiments>3</experiments>
</comment>
<comment type="interaction">
    <interactant intactId="EBI-707573">
        <id>Q8WXK3</id>
    </interactant>
    <interactant intactId="EBI-985879">
        <id>P37840</id>
        <label>SNCA</label>
    </interactant>
    <organismsDiffer>false</organismsDiffer>
    <experiments>3</experiments>
</comment>
<comment type="interaction">
    <interactant intactId="EBI-707573">
        <id>Q8WXK3</id>
    </interactant>
    <interactant intactId="EBI-5235340">
        <id>Q7Z699</id>
        <label>SPRED1</label>
    </interactant>
    <organismsDiffer>false</organismsDiffer>
    <experiments>3</experiments>
</comment>
<comment type="interaction">
    <interactant intactId="EBI-707573">
        <id>Q8WXK3</id>
    </interactant>
    <interactant intactId="EBI-372899">
        <id>Q13148</id>
        <label>TARDBP</label>
    </interactant>
    <organismsDiffer>false</organismsDiffer>
    <experiments>3</experiments>
</comment>
<comment type="interaction">
    <interactant intactId="EBI-707573">
        <id>Q8WXK3</id>
    </interactant>
    <interactant intactId="EBI-2107455">
        <id>Q08AM6</id>
        <label>VAC14</label>
    </interactant>
    <organismsDiffer>false</organismsDiffer>
    <experiments>6</experiments>
</comment>
<comment type="interaction">
    <interactant intactId="EBI-707573">
        <id>Q8WXK3</id>
    </interactant>
    <interactant intactId="EBI-12157263">
        <id>P40337-2</id>
        <label>VHL</label>
    </interactant>
    <organismsDiffer>false</organismsDiffer>
    <experiments>3</experiments>
</comment>
<comment type="interaction">
    <interactant intactId="EBI-707573">
        <id>Q8WXK3</id>
    </interactant>
    <interactant intactId="EBI-10182121">
        <id>Q8NF64-2</id>
        <label>ZMIZ2</label>
    </interactant>
    <organismsDiffer>false</organismsDiffer>
    <experiments>3</experiments>
</comment>
<comment type="interaction">
    <interactant intactId="EBI-12015080">
        <id>Q8WXK3-2</id>
    </interactant>
    <interactant intactId="EBI-745641">
        <id>Q96DX5</id>
        <label>ASB9</label>
    </interactant>
    <organismsDiffer>false</organismsDiffer>
    <experiments>3</experiments>
</comment>
<comment type="interaction">
    <interactant intactId="EBI-12015080">
        <id>Q8WXK3-2</id>
    </interactant>
    <interactant intactId="EBI-11954292">
        <id>Q86V38</id>
        <label>ATN1</label>
    </interactant>
    <organismsDiffer>false</organismsDiffer>
    <experiments>3</experiments>
</comment>
<comment type="interaction">
    <interactant intactId="EBI-12015080">
        <id>Q8WXK3-2</id>
    </interactant>
    <interactant intactId="EBI-2565863">
        <id>P00488</id>
        <label>F13A1</label>
    </interactant>
    <organismsDiffer>false</organismsDiffer>
    <experiments>3</experiments>
</comment>
<comment type="interaction">
    <interactant intactId="EBI-12015080">
        <id>Q8WXK3-2</id>
    </interactant>
    <interactant intactId="EBI-11956675">
        <id>Q9GZV7</id>
        <label>HAPLN2</label>
    </interactant>
    <organismsDiffer>false</organismsDiffer>
    <experiments>3</experiments>
</comment>
<comment type="interaction">
    <interactant intactId="EBI-12015080">
        <id>Q8WXK3-2</id>
    </interactant>
    <interactant intactId="EBI-2432309">
        <id>Q92876</id>
        <label>KLK6</label>
    </interactant>
    <organismsDiffer>false</organismsDiffer>
    <experiments>3</experiments>
</comment>
<comment type="interaction">
    <interactant intactId="EBI-12015080">
        <id>Q8WXK3-2</id>
    </interactant>
    <interactant intactId="EBI-1052037">
        <id>Q8IUC1</id>
        <label>KRTAP11-1</label>
    </interactant>
    <organismsDiffer>false</organismsDiffer>
    <experiments>3</experiments>
</comment>
<comment type="interaction">
    <interactant intactId="EBI-12015080">
        <id>Q8WXK3-2</id>
    </interactant>
    <interactant intactId="EBI-11992140">
        <id>Q3LI76</id>
        <label>KRTAP15-1</label>
    </interactant>
    <organismsDiffer>false</organismsDiffer>
    <experiments>3</experiments>
</comment>
<comment type="interaction">
    <interactant intactId="EBI-12015080">
        <id>Q8WXK3-2</id>
    </interactant>
    <interactant intactId="EBI-10699187">
        <id>Q8IXL7-2</id>
        <label>MSRB3</label>
    </interactant>
    <organismsDiffer>false</organismsDiffer>
    <experiments>3</experiments>
</comment>
<comment type="interaction">
    <interactant intactId="EBI-12015080">
        <id>Q8WXK3-2</id>
    </interactant>
    <interactant intactId="EBI-12813389">
        <id>Q8TDS5</id>
        <label>OXER1</label>
    </interactant>
    <organismsDiffer>false</organismsDiffer>
    <experiments>3</experiments>
</comment>
<comment type="interaction">
    <interactant intactId="EBI-12015080">
        <id>Q8WXK3-2</id>
    </interactant>
    <interactant intactId="EBI-1389308">
        <id>Q7Z3K3</id>
        <label>POGZ</label>
    </interactant>
    <organismsDiffer>false</organismsDiffer>
    <experiments>3</experiments>
</comment>
<comment type="interaction">
    <interactant intactId="EBI-12015080">
        <id>Q8WXK3-2</id>
    </interactant>
    <interactant intactId="EBI-12029004">
        <id>P78424</id>
        <label>POU6F2</label>
    </interactant>
    <organismsDiffer>false</organismsDiffer>
    <experiments>3</experiments>
</comment>
<comment type="interaction">
    <interactant intactId="EBI-12015080">
        <id>Q8WXK3-2</id>
    </interactant>
    <interactant intactId="EBI-21251460">
        <id>O60260-5</id>
        <label>PRKN</label>
    </interactant>
    <organismsDiffer>false</organismsDiffer>
    <experiments>3</experiments>
</comment>
<comment type="interaction">
    <interactant intactId="EBI-12015080">
        <id>Q8WXK3-2</id>
    </interactant>
    <interactant intactId="EBI-5235340">
        <id>Q7Z699</id>
        <label>SPRED1</label>
    </interactant>
    <organismsDiffer>false</organismsDiffer>
    <experiments>3</experiments>
</comment>
<comment type="interaction">
    <interactant intactId="EBI-12015080">
        <id>Q8WXK3-2</id>
    </interactant>
    <interactant intactId="EBI-358993">
        <id>Q15645</id>
        <label>TRIP13</label>
    </interactant>
    <organismsDiffer>false</organismsDiffer>
    <experiments>3</experiments>
</comment>
<comment type="interaction">
    <interactant intactId="EBI-12015080">
        <id>Q8WXK3-2</id>
    </interactant>
    <interactant intactId="EBI-2514383">
        <id>Q5T6F2</id>
        <label>UBAP2</label>
    </interactant>
    <organismsDiffer>false</organismsDiffer>
    <experiments>3</experiments>
</comment>
<comment type="interaction">
    <interactant intactId="EBI-12015080">
        <id>Q8WXK3-2</id>
    </interactant>
    <interactant intactId="EBI-2107455">
        <id>Q08AM6</id>
        <label>VAC14</label>
    </interactant>
    <organismsDiffer>false</organismsDiffer>
    <experiments>3</experiments>
</comment>
<comment type="interaction">
    <interactant intactId="EBI-12015080">
        <id>Q8WXK3-2</id>
    </interactant>
    <interactant intactId="EBI-745520">
        <id>Q9P0T4</id>
        <label>ZNF581</label>
    </interactant>
    <organismsDiffer>false</organismsDiffer>
    <experiments>3</experiments>
</comment>
<comment type="alternative products">
    <event type="alternative splicing"/>
    <isoform>
        <id>Q8WXK3-1</id>
        <name>1</name>
        <sequence type="displayed"/>
    </isoform>
    <isoform>
        <id>Q8WXK3-2</id>
        <name>2</name>
        <sequence type="described" ref="VSP_000272 VSP_000273"/>
    </isoform>
</comment>
<comment type="domain">
    <text evidence="1">The SOCS box domain mediates the interaction with the Elongin BC complex, an adapter module in different E3 ubiquitin-protein ligase complexes.</text>
</comment>
<comment type="similarity">
    <text evidence="4">Belongs to the ankyrin SOCS box (ASB) family.</text>
</comment>
<comment type="sequence caution" evidence="4">
    <conflict type="frameshift">
        <sequence resource="EMBL-CDS" id="AAL57350"/>
    </conflict>
</comment>
<name>ASB13_HUMAN</name>
<accession>Q8WXK3</accession>
<accession>A8K7Q6</accession>
<accession>D3DRR2</accession>
<accession>Q96EP7</accession>
<accession>Q9H8Z1</accession>
<protein>
    <recommendedName>
        <fullName>Ankyrin repeat and SOCS box protein 13</fullName>
        <shortName>ASB-13</shortName>
    </recommendedName>
</protein>
<feature type="chain" id="PRO_0000066949" description="Ankyrin repeat and SOCS box protein 13">
    <location>
        <begin position="1"/>
        <end position="278"/>
    </location>
</feature>
<feature type="repeat" description="ANK 1">
    <location>
        <begin position="18"/>
        <end position="47"/>
    </location>
</feature>
<feature type="repeat" description="ANK 2">
    <location>
        <begin position="51"/>
        <end position="80"/>
    </location>
</feature>
<feature type="repeat" description="ANK 3">
    <location>
        <begin position="84"/>
        <end position="113"/>
    </location>
</feature>
<feature type="repeat" description="ANK 4">
    <location>
        <begin position="116"/>
        <end position="145"/>
    </location>
</feature>
<feature type="repeat" description="ANK 5">
    <location>
        <begin position="149"/>
        <end position="178"/>
    </location>
</feature>
<feature type="repeat" description="ANK 6">
    <location>
        <begin position="181"/>
        <end position="210"/>
    </location>
</feature>
<feature type="domain" description="SOCS box" evidence="2">
    <location>
        <begin position="229"/>
        <end position="278"/>
    </location>
</feature>
<feature type="splice variant" id="VSP_000272" description="In isoform 2." evidence="3">
    <original>G</original>
    <variation>A</variation>
    <location>
        <position position="173"/>
    </location>
</feature>
<feature type="splice variant" id="VSP_000273" description="In isoform 2." evidence="3">
    <location>
        <begin position="174"/>
        <end position="278"/>
    </location>
</feature>
<feature type="sequence conflict" description="In Ref. 2; BAB14456." evidence="4" ref="2">
    <original>L</original>
    <variation>S</variation>
    <location>
        <position position="104"/>
    </location>
</feature>
<feature type="sequence conflict" description="In Ref. 1; AAL57350." evidence="4" ref="1">
    <original>S</original>
    <variation>D</variation>
    <location>
        <position position="129"/>
    </location>
</feature>
<keyword id="KW-0025">Alternative splicing</keyword>
<keyword id="KW-0040">ANK repeat</keyword>
<keyword id="KW-1267">Proteomics identification</keyword>
<keyword id="KW-1185">Reference proteome</keyword>
<keyword id="KW-0677">Repeat</keyword>
<keyword id="KW-0833">Ubl conjugation pathway</keyword>
<gene>
    <name type="primary">ASB13</name>
</gene>
<organism>
    <name type="scientific">Homo sapiens</name>
    <name type="common">Human</name>
    <dbReference type="NCBI Taxonomy" id="9606"/>
    <lineage>
        <taxon>Eukaryota</taxon>
        <taxon>Metazoa</taxon>
        <taxon>Chordata</taxon>
        <taxon>Craniata</taxon>
        <taxon>Vertebrata</taxon>
        <taxon>Euteleostomi</taxon>
        <taxon>Mammalia</taxon>
        <taxon>Eutheria</taxon>
        <taxon>Euarchontoglires</taxon>
        <taxon>Primates</taxon>
        <taxon>Haplorrhini</taxon>
        <taxon>Catarrhini</taxon>
        <taxon>Hominidae</taxon>
        <taxon>Homo</taxon>
    </lineage>
</organism>
<reference key="1">
    <citation type="submission" date="2001-07" db="EMBL/GenBank/DDBJ databases">
        <title>SOCS box proteins.</title>
        <authorList>
            <person name="Kile B.T."/>
            <person name="Nicola N.A."/>
        </authorList>
    </citation>
    <scope>NUCLEOTIDE SEQUENCE [MRNA] (ISOFORM 1)</scope>
</reference>
<reference key="2">
    <citation type="journal article" date="2004" name="Nat. Genet.">
        <title>Complete sequencing and characterization of 21,243 full-length human cDNAs.</title>
        <authorList>
            <person name="Ota T."/>
            <person name="Suzuki Y."/>
            <person name="Nishikawa T."/>
            <person name="Otsuki T."/>
            <person name="Sugiyama T."/>
            <person name="Irie R."/>
            <person name="Wakamatsu A."/>
            <person name="Hayashi K."/>
            <person name="Sato H."/>
            <person name="Nagai K."/>
            <person name="Kimura K."/>
            <person name="Makita H."/>
            <person name="Sekine M."/>
            <person name="Obayashi M."/>
            <person name="Nishi T."/>
            <person name="Shibahara T."/>
            <person name="Tanaka T."/>
            <person name="Ishii S."/>
            <person name="Yamamoto J."/>
            <person name="Saito K."/>
            <person name="Kawai Y."/>
            <person name="Isono Y."/>
            <person name="Nakamura Y."/>
            <person name="Nagahari K."/>
            <person name="Murakami K."/>
            <person name="Yasuda T."/>
            <person name="Iwayanagi T."/>
            <person name="Wagatsuma M."/>
            <person name="Shiratori A."/>
            <person name="Sudo H."/>
            <person name="Hosoiri T."/>
            <person name="Kaku Y."/>
            <person name="Kodaira H."/>
            <person name="Kondo H."/>
            <person name="Sugawara M."/>
            <person name="Takahashi M."/>
            <person name="Kanda K."/>
            <person name="Yokoi T."/>
            <person name="Furuya T."/>
            <person name="Kikkawa E."/>
            <person name="Omura Y."/>
            <person name="Abe K."/>
            <person name="Kamihara K."/>
            <person name="Katsuta N."/>
            <person name="Sato K."/>
            <person name="Tanikawa M."/>
            <person name="Yamazaki M."/>
            <person name="Ninomiya K."/>
            <person name="Ishibashi T."/>
            <person name="Yamashita H."/>
            <person name="Murakawa K."/>
            <person name="Fujimori K."/>
            <person name="Tanai H."/>
            <person name="Kimata M."/>
            <person name="Watanabe M."/>
            <person name="Hiraoka S."/>
            <person name="Chiba Y."/>
            <person name="Ishida S."/>
            <person name="Ono Y."/>
            <person name="Takiguchi S."/>
            <person name="Watanabe S."/>
            <person name="Yosida M."/>
            <person name="Hotuta T."/>
            <person name="Kusano J."/>
            <person name="Kanehori K."/>
            <person name="Takahashi-Fujii A."/>
            <person name="Hara H."/>
            <person name="Tanase T.-O."/>
            <person name="Nomura Y."/>
            <person name="Togiya S."/>
            <person name="Komai F."/>
            <person name="Hara R."/>
            <person name="Takeuchi K."/>
            <person name="Arita M."/>
            <person name="Imose N."/>
            <person name="Musashino K."/>
            <person name="Yuuki H."/>
            <person name="Oshima A."/>
            <person name="Sasaki N."/>
            <person name="Aotsuka S."/>
            <person name="Yoshikawa Y."/>
            <person name="Matsunawa H."/>
            <person name="Ichihara T."/>
            <person name="Shiohata N."/>
            <person name="Sano S."/>
            <person name="Moriya S."/>
            <person name="Momiyama H."/>
            <person name="Satoh N."/>
            <person name="Takami S."/>
            <person name="Terashima Y."/>
            <person name="Suzuki O."/>
            <person name="Nakagawa S."/>
            <person name="Senoh A."/>
            <person name="Mizoguchi H."/>
            <person name="Goto Y."/>
            <person name="Shimizu F."/>
            <person name="Wakebe H."/>
            <person name="Hishigaki H."/>
            <person name="Watanabe T."/>
            <person name="Sugiyama A."/>
            <person name="Takemoto M."/>
            <person name="Kawakami B."/>
            <person name="Yamazaki M."/>
            <person name="Watanabe K."/>
            <person name="Kumagai A."/>
            <person name="Itakura S."/>
            <person name="Fukuzumi Y."/>
            <person name="Fujimori Y."/>
            <person name="Komiyama M."/>
            <person name="Tashiro H."/>
            <person name="Tanigami A."/>
            <person name="Fujiwara T."/>
            <person name="Ono T."/>
            <person name="Yamada K."/>
            <person name="Fujii Y."/>
            <person name="Ozaki K."/>
            <person name="Hirao M."/>
            <person name="Ohmori Y."/>
            <person name="Kawabata A."/>
            <person name="Hikiji T."/>
            <person name="Kobatake N."/>
            <person name="Inagaki H."/>
            <person name="Ikema Y."/>
            <person name="Okamoto S."/>
            <person name="Okitani R."/>
            <person name="Kawakami T."/>
            <person name="Noguchi S."/>
            <person name="Itoh T."/>
            <person name="Shigeta K."/>
            <person name="Senba T."/>
            <person name="Matsumura K."/>
            <person name="Nakajima Y."/>
            <person name="Mizuno T."/>
            <person name="Morinaga M."/>
            <person name="Sasaki M."/>
            <person name="Togashi T."/>
            <person name="Oyama M."/>
            <person name="Hata H."/>
            <person name="Watanabe M."/>
            <person name="Komatsu T."/>
            <person name="Mizushima-Sugano J."/>
            <person name="Satoh T."/>
            <person name="Shirai Y."/>
            <person name="Takahashi Y."/>
            <person name="Nakagawa K."/>
            <person name="Okumura K."/>
            <person name="Nagase T."/>
            <person name="Nomura N."/>
            <person name="Kikuchi H."/>
            <person name="Masuho Y."/>
            <person name="Yamashita R."/>
            <person name="Nakai K."/>
            <person name="Yada T."/>
            <person name="Nakamura Y."/>
            <person name="Ohara O."/>
            <person name="Isogai T."/>
            <person name="Sugano S."/>
        </authorList>
    </citation>
    <scope>NUCLEOTIDE SEQUENCE [LARGE SCALE MRNA] (ISOFORM 1)</scope>
    <source>
        <tissue>Stomach</tissue>
    </source>
</reference>
<reference key="3">
    <citation type="submission" date="2004-06" db="EMBL/GenBank/DDBJ databases">
        <title>Cloning of human full open reading frames in Gateway(TM) system entry vector (pDONR201).</title>
        <authorList>
            <person name="Ebert L."/>
            <person name="Schick M."/>
            <person name="Neubert P."/>
            <person name="Schatten R."/>
            <person name="Henze S."/>
            <person name="Korn B."/>
        </authorList>
    </citation>
    <scope>NUCLEOTIDE SEQUENCE [LARGE SCALE MRNA]</scope>
</reference>
<reference key="4">
    <citation type="journal article" date="2004" name="Nature">
        <title>The DNA sequence and comparative analysis of human chromosome 10.</title>
        <authorList>
            <person name="Deloukas P."/>
            <person name="Earthrowl M.E."/>
            <person name="Grafham D.V."/>
            <person name="Rubenfield M."/>
            <person name="French L."/>
            <person name="Steward C.A."/>
            <person name="Sims S.K."/>
            <person name="Jones M.C."/>
            <person name="Searle S."/>
            <person name="Scott C."/>
            <person name="Howe K."/>
            <person name="Hunt S.E."/>
            <person name="Andrews T.D."/>
            <person name="Gilbert J.G.R."/>
            <person name="Swarbreck D."/>
            <person name="Ashurst J.L."/>
            <person name="Taylor A."/>
            <person name="Battles J."/>
            <person name="Bird C.P."/>
            <person name="Ainscough R."/>
            <person name="Almeida J.P."/>
            <person name="Ashwell R.I.S."/>
            <person name="Ambrose K.D."/>
            <person name="Babbage A.K."/>
            <person name="Bagguley C.L."/>
            <person name="Bailey J."/>
            <person name="Banerjee R."/>
            <person name="Bates K."/>
            <person name="Beasley H."/>
            <person name="Bray-Allen S."/>
            <person name="Brown A.J."/>
            <person name="Brown J.Y."/>
            <person name="Burford D.C."/>
            <person name="Burrill W."/>
            <person name="Burton J."/>
            <person name="Cahill P."/>
            <person name="Camire D."/>
            <person name="Carter N.P."/>
            <person name="Chapman J.C."/>
            <person name="Clark S.Y."/>
            <person name="Clarke G."/>
            <person name="Clee C.M."/>
            <person name="Clegg S."/>
            <person name="Corby N."/>
            <person name="Coulson A."/>
            <person name="Dhami P."/>
            <person name="Dutta I."/>
            <person name="Dunn M."/>
            <person name="Faulkner L."/>
            <person name="Frankish A."/>
            <person name="Frankland J.A."/>
            <person name="Garner P."/>
            <person name="Garnett J."/>
            <person name="Gribble S."/>
            <person name="Griffiths C."/>
            <person name="Grocock R."/>
            <person name="Gustafson E."/>
            <person name="Hammond S."/>
            <person name="Harley J.L."/>
            <person name="Hart E."/>
            <person name="Heath P.D."/>
            <person name="Ho T.P."/>
            <person name="Hopkins B."/>
            <person name="Horne J."/>
            <person name="Howden P.J."/>
            <person name="Huckle E."/>
            <person name="Hynds C."/>
            <person name="Johnson C."/>
            <person name="Johnson D."/>
            <person name="Kana A."/>
            <person name="Kay M."/>
            <person name="Kimberley A.M."/>
            <person name="Kershaw J.K."/>
            <person name="Kokkinaki M."/>
            <person name="Laird G.K."/>
            <person name="Lawlor S."/>
            <person name="Lee H.M."/>
            <person name="Leongamornlert D.A."/>
            <person name="Laird G."/>
            <person name="Lloyd C."/>
            <person name="Lloyd D.M."/>
            <person name="Loveland J."/>
            <person name="Lovell J."/>
            <person name="McLaren S."/>
            <person name="McLay K.E."/>
            <person name="McMurray A."/>
            <person name="Mashreghi-Mohammadi M."/>
            <person name="Matthews L."/>
            <person name="Milne S."/>
            <person name="Nickerson T."/>
            <person name="Nguyen M."/>
            <person name="Overton-Larty E."/>
            <person name="Palmer S.A."/>
            <person name="Pearce A.V."/>
            <person name="Peck A.I."/>
            <person name="Pelan S."/>
            <person name="Phillimore B."/>
            <person name="Porter K."/>
            <person name="Rice C.M."/>
            <person name="Rogosin A."/>
            <person name="Ross M.T."/>
            <person name="Sarafidou T."/>
            <person name="Sehra H.K."/>
            <person name="Shownkeen R."/>
            <person name="Skuce C.D."/>
            <person name="Smith M."/>
            <person name="Standring L."/>
            <person name="Sycamore N."/>
            <person name="Tester J."/>
            <person name="Thorpe A."/>
            <person name="Torcasso W."/>
            <person name="Tracey A."/>
            <person name="Tromans A."/>
            <person name="Tsolas J."/>
            <person name="Wall M."/>
            <person name="Walsh J."/>
            <person name="Wang H."/>
            <person name="Weinstock K."/>
            <person name="West A.P."/>
            <person name="Willey D.L."/>
            <person name="Whitehead S.L."/>
            <person name="Wilming L."/>
            <person name="Wray P.W."/>
            <person name="Young L."/>
            <person name="Chen Y."/>
            <person name="Lovering R.C."/>
            <person name="Moschonas N.K."/>
            <person name="Siebert R."/>
            <person name="Fechtel K."/>
            <person name="Bentley D."/>
            <person name="Durbin R.M."/>
            <person name="Hubbard T."/>
            <person name="Doucette-Stamm L."/>
            <person name="Beck S."/>
            <person name="Smith D.R."/>
            <person name="Rogers J."/>
        </authorList>
    </citation>
    <scope>NUCLEOTIDE SEQUENCE [LARGE SCALE GENOMIC DNA]</scope>
</reference>
<reference key="5">
    <citation type="submission" date="2005-09" db="EMBL/GenBank/DDBJ databases">
        <authorList>
            <person name="Mural R.J."/>
            <person name="Istrail S."/>
            <person name="Sutton G.G."/>
            <person name="Florea L."/>
            <person name="Halpern A.L."/>
            <person name="Mobarry C.M."/>
            <person name="Lippert R."/>
            <person name="Walenz B."/>
            <person name="Shatkay H."/>
            <person name="Dew I."/>
            <person name="Miller J.R."/>
            <person name="Flanigan M.J."/>
            <person name="Edwards N.J."/>
            <person name="Bolanos R."/>
            <person name="Fasulo D."/>
            <person name="Halldorsson B.V."/>
            <person name="Hannenhalli S."/>
            <person name="Turner R."/>
            <person name="Yooseph S."/>
            <person name="Lu F."/>
            <person name="Nusskern D.R."/>
            <person name="Shue B.C."/>
            <person name="Zheng X.H."/>
            <person name="Zhong F."/>
            <person name="Delcher A.L."/>
            <person name="Huson D.H."/>
            <person name="Kravitz S.A."/>
            <person name="Mouchard L."/>
            <person name="Reinert K."/>
            <person name="Remington K.A."/>
            <person name="Clark A.G."/>
            <person name="Waterman M.S."/>
            <person name="Eichler E.E."/>
            <person name="Adams M.D."/>
            <person name="Hunkapiller M.W."/>
            <person name="Myers E.W."/>
            <person name="Venter J.C."/>
        </authorList>
    </citation>
    <scope>NUCLEOTIDE SEQUENCE [LARGE SCALE GENOMIC DNA]</scope>
</reference>
<reference key="6">
    <citation type="journal article" date="2004" name="Genome Res.">
        <title>The status, quality, and expansion of the NIH full-length cDNA project: the Mammalian Gene Collection (MGC).</title>
        <authorList>
            <consortium name="The MGC Project Team"/>
        </authorList>
    </citation>
    <scope>NUCLEOTIDE SEQUENCE [LARGE SCALE MRNA] (ISOFORM 2)</scope>
    <source>
        <tissue>Uterus</tissue>
    </source>
</reference>
<proteinExistence type="evidence at protein level"/>
<sequence length="278" mass="30007">MEPRAADGCFLGDVGFWVERTPVHEAAQRGESLQLQQLIESGACVNQVTVDSITPLHAASLQGQARCVQLLLAAGAQVDARNIDGSTPLCDACASGSIECVKLLLSYGAKVNPPLYTASPLHEACMSGSSECVRLLIDVGANLEAHDCHFGTPLHVACAREHLDCVKVLLNAGANVNAAKLHETALHHAAKVKNVDLIEMLIEFGGNIYARDNRGKKPSDYTWSSSAPAKCFEYYEKTPLTLSQLCRVNLRKATGVRGLEKIAKLNIPPRLIDYLSYN</sequence>